<dbReference type="EMBL" id="AP008232">
    <property type="protein sequence ID" value="BAE74605.1"/>
    <property type="molecule type" value="Genomic_DNA"/>
</dbReference>
<dbReference type="SMR" id="Q2NTC0"/>
<dbReference type="STRING" id="343509.SG1330"/>
<dbReference type="KEGG" id="sgl:SG1330"/>
<dbReference type="eggNOG" id="COG3140">
    <property type="taxonomic scope" value="Bacteria"/>
</dbReference>
<dbReference type="HOGENOM" id="CLU_185263_0_0_6"/>
<dbReference type="OrthoDB" id="6522084at2"/>
<dbReference type="Proteomes" id="UP000001932">
    <property type="component" value="Chromosome"/>
</dbReference>
<dbReference type="HAMAP" id="MF_00507">
    <property type="entry name" value="UPF0181"/>
    <property type="match status" value="1"/>
</dbReference>
<dbReference type="InterPro" id="IPR005371">
    <property type="entry name" value="UPF0181"/>
</dbReference>
<dbReference type="NCBIfam" id="NF003476">
    <property type="entry name" value="PRK05114.1"/>
    <property type="match status" value="1"/>
</dbReference>
<dbReference type="Pfam" id="PF03701">
    <property type="entry name" value="UPF0181"/>
    <property type="match status" value="1"/>
</dbReference>
<gene>
    <name type="ordered locus">SG1330</name>
</gene>
<organism>
    <name type="scientific">Sodalis glossinidius (strain morsitans)</name>
    <dbReference type="NCBI Taxonomy" id="343509"/>
    <lineage>
        <taxon>Bacteria</taxon>
        <taxon>Pseudomonadati</taxon>
        <taxon>Pseudomonadota</taxon>
        <taxon>Gammaproteobacteria</taxon>
        <taxon>Enterobacterales</taxon>
        <taxon>Bruguierivoracaceae</taxon>
        <taxon>Sodalis</taxon>
    </lineage>
</organism>
<proteinExistence type="inferred from homology"/>
<sequence length="80" mass="8848">MLNDMPALTHEQQQLAVERIQALMAEGMSSGAAIAQVARELRAGYTGERVTLRWEEDTEVLETPAARAETDPYDSNPDDD</sequence>
<feature type="chain" id="PRO_0000236636" description="UPF0181 protein SG1330">
    <location>
        <begin position="1"/>
        <end position="80"/>
    </location>
</feature>
<feature type="region of interest" description="Disordered" evidence="2">
    <location>
        <begin position="58"/>
        <end position="80"/>
    </location>
</feature>
<evidence type="ECO:0000255" key="1">
    <source>
        <dbReference type="HAMAP-Rule" id="MF_00507"/>
    </source>
</evidence>
<evidence type="ECO:0000256" key="2">
    <source>
        <dbReference type="SAM" id="MobiDB-lite"/>
    </source>
</evidence>
<protein>
    <recommendedName>
        <fullName evidence="1">UPF0181 protein SG1330</fullName>
    </recommendedName>
</protein>
<name>Y1330_SODGM</name>
<accession>Q2NTC0</accession>
<reference key="1">
    <citation type="journal article" date="2006" name="Genome Res.">
        <title>Massive genome erosion and functional adaptations provide insights into the symbiotic lifestyle of Sodalis glossinidius in the tsetse host.</title>
        <authorList>
            <person name="Toh H."/>
            <person name="Weiss B.L."/>
            <person name="Perkin S.A.H."/>
            <person name="Yamashita A."/>
            <person name="Oshima K."/>
            <person name="Hattori M."/>
            <person name="Aksoy S."/>
        </authorList>
    </citation>
    <scope>NUCLEOTIDE SEQUENCE [LARGE SCALE GENOMIC DNA]</scope>
    <source>
        <strain>morsitans</strain>
    </source>
</reference>
<comment type="similarity">
    <text evidence="1">Belongs to the UPF0181 family.</text>
</comment>